<name>ARGB_SYNWW</name>
<comment type="function">
    <text evidence="1">Catalyzes the ATP-dependent phosphorylation of N-acetyl-L-glutamate.</text>
</comment>
<comment type="catalytic activity">
    <reaction evidence="1">
        <text>N-acetyl-L-glutamate + ATP = N-acetyl-L-glutamyl 5-phosphate + ADP</text>
        <dbReference type="Rhea" id="RHEA:14629"/>
        <dbReference type="ChEBI" id="CHEBI:30616"/>
        <dbReference type="ChEBI" id="CHEBI:44337"/>
        <dbReference type="ChEBI" id="CHEBI:57936"/>
        <dbReference type="ChEBI" id="CHEBI:456216"/>
        <dbReference type="EC" id="2.7.2.8"/>
    </reaction>
</comment>
<comment type="pathway">
    <text evidence="1">Amino-acid biosynthesis; L-arginine biosynthesis; N(2)-acetyl-L-ornithine from L-glutamate: step 2/4.</text>
</comment>
<comment type="subcellular location">
    <subcellularLocation>
        <location evidence="1">Cytoplasm</location>
    </subcellularLocation>
</comment>
<comment type="similarity">
    <text evidence="1">Belongs to the acetylglutamate kinase family. ArgB subfamily.</text>
</comment>
<organism>
    <name type="scientific">Syntrophomonas wolfei subsp. wolfei (strain DSM 2245B / Goettingen)</name>
    <dbReference type="NCBI Taxonomy" id="335541"/>
    <lineage>
        <taxon>Bacteria</taxon>
        <taxon>Bacillati</taxon>
        <taxon>Bacillota</taxon>
        <taxon>Clostridia</taxon>
        <taxon>Eubacteriales</taxon>
        <taxon>Syntrophomonadaceae</taxon>
        <taxon>Syntrophomonas</taxon>
    </lineage>
</organism>
<dbReference type="EC" id="2.7.2.8" evidence="1"/>
<dbReference type="EMBL" id="CP000448">
    <property type="protein sequence ID" value="ABI69580.1"/>
    <property type="molecule type" value="Genomic_DNA"/>
</dbReference>
<dbReference type="RefSeq" id="WP_011641664.1">
    <property type="nucleotide sequence ID" value="NC_008346.1"/>
</dbReference>
<dbReference type="SMR" id="Q0AUM4"/>
<dbReference type="STRING" id="335541.Swol_2289"/>
<dbReference type="KEGG" id="swo:Swol_2289"/>
<dbReference type="eggNOG" id="COG0548">
    <property type="taxonomic scope" value="Bacteria"/>
</dbReference>
<dbReference type="HOGENOM" id="CLU_053680_0_0_9"/>
<dbReference type="OrthoDB" id="9803155at2"/>
<dbReference type="UniPathway" id="UPA00068">
    <property type="reaction ID" value="UER00107"/>
</dbReference>
<dbReference type="Proteomes" id="UP000001968">
    <property type="component" value="Chromosome"/>
</dbReference>
<dbReference type="GO" id="GO:0005737">
    <property type="term" value="C:cytoplasm"/>
    <property type="evidence" value="ECO:0007669"/>
    <property type="project" value="UniProtKB-SubCell"/>
</dbReference>
<dbReference type="GO" id="GO:0003991">
    <property type="term" value="F:acetylglutamate kinase activity"/>
    <property type="evidence" value="ECO:0007669"/>
    <property type="project" value="UniProtKB-UniRule"/>
</dbReference>
<dbReference type="GO" id="GO:0005524">
    <property type="term" value="F:ATP binding"/>
    <property type="evidence" value="ECO:0007669"/>
    <property type="project" value="UniProtKB-UniRule"/>
</dbReference>
<dbReference type="GO" id="GO:0042450">
    <property type="term" value="P:arginine biosynthetic process via ornithine"/>
    <property type="evidence" value="ECO:0007669"/>
    <property type="project" value="UniProtKB-UniRule"/>
</dbReference>
<dbReference type="GO" id="GO:0006526">
    <property type="term" value="P:L-arginine biosynthetic process"/>
    <property type="evidence" value="ECO:0007669"/>
    <property type="project" value="UniProtKB-UniPathway"/>
</dbReference>
<dbReference type="CDD" id="cd04250">
    <property type="entry name" value="AAK_NAGK-C"/>
    <property type="match status" value="1"/>
</dbReference>
<dbReference type="FunFam" id="3.40.1160.10:FF:000004">
    <property type="entry name" value="Acetylglutamate kinase"/>
    <property type="match status" value="1"/>
</dbReference>
<dbReference type="Gene3D" id="3.40.1160.10">
    <property type="entry name" value="Acetylglutamate kinase-like"/>
    <property type="match status" value="1"/>
</dbReference>
<dbReference type="HAMAP" id="MF_00082">
    <property type="entry name" value="ArgB"/>
    <property type="match status" value="1"/>
</dbReference>
<dbReference type="InterPro" id="IPR036393">
    <property type="entry name" value="AceGlu_kinase-like_sf"/>
</dbReference>
<dbReference type="InterPro" id="IPR004662">
    <property type="entry name" value="AcgluKinase_fam"/>
</dbReference>
<dbReference type="InterPro" id="IPR037528">
    <property type="entry name" value="ArgB"/>
</dbReference>
<dbReference type="InterPro" id="IPR001048">
    <property type="entry name" value="Asp/Glu/Uridylate_kinase"/>
</dbReference>
<dbReference type="InterPro" id="IPR001057">
    <property type="entry name" value="Glu/AcGlu_kinase"/>
</dbReference>
<dbReference type="InterPro" id="IPR041727">
    <property type="entry name" value="NAGK-C"/>
</dbReference>
<dbReference type="NCBIfam" id="TIGR00761">
    <property type="entry name" value="argB"/>
    <property type="match status" value="1"/>
</dbReference>
<dbReference type="PANTHER" id="PTHR23342">
    <property type="entry name" value="N-ACETYLGLUTAMATE SYNTHASE"/>
    <property type="match status" value="1"/>
</dbReference>
<dbReference type="PANTHER" id="PTHR23342:SF0">
    <property type="entry name" value="N-ACETYLGLUTAMATE SYNTHASE, MITOCHONDRIAL"/>
    <property type="match status" value="1"/>
</dbReference>
<dbReference type="Pfam" id="PF00696">
    <property type="entry name" value="AA_kinase"/>
    <property type="match status" value="1"/>
</dbReference>
<dbReference type="PIRSF" id="PIRSF000728">
    <property type="entry name" value="NAGK"/>
    <property type="match status" value="1"/>
</dbReference>
<dbReference type="PRINTS" id="PR00474">
    <property type="entry name" value="GLU5KINASE"/>
</dbReference>
<dbReference type="SUPFAM" id="SSF53633">
    <property type="entry name" value="Carbamate kinase-like"/>
    <property type="match status" value="1"/>
</dbReference>
<keyword id="KW-0028">Amino-acid biosynthesis</keyword>
<keyword id="KW-0055">Arginine biosynthesis</keyword>
<keyword id="KW-0067">ATP-binding</keyword>
<keyword id="KW-0963">Cytoplasm</keyword>
<keyword id="KW-0418">Kinase</keyword>
<keyword id="KW-0547">Nucleotide-binding</keyword>
<keyword id="KW-1185">Reference proteome</keyword>
<keyword id="KW-0808">Transferase</keyword>
<feature type="chain" id="PRO_0000264776" description="Acetylglutamate kinase">
    <location>
        <begin position="1"/>
        <end position="287"/>
    </location>
</feature>
<feature type="binding site" evidence="1">
    <location>
        <begin position="65"/>
        <end position="66"/>
    </location>
    <ligand>
        <name>substrate</name>
    </ligand>
</feature>
<feature type="binding site" evidence="1">
    <location>
        <position position="87"/>
    </location>
    <ligand>
        <name>substrate</name>
    </ligand>
</feature>
<feature type="binding site" evidence="1">
    <location>
        <position position="181"/>
    </location>
    <ligand>
        <name>substrate</name>
    </ligand>
</feature>
<feature type="site" description="Transition state stabilizer" evidence="1">
    <location>
        <position position="30"/>
    </location>
</feature>
<feature type="site" description="Transition state stabilizer" evidence="1">
    <location>
        <position position="244"/>
    </location>
</feature>
<proteinExistence type="inferred from homology"/>
<protein>
    <recommendedName>
        <fullName evidence="1">Acetylglutamate kinase</fullName>
        <ecNumber evidence="1">2.7.2.8</ecNumber>
    </recommendedName>
    <alternativeName>
        <fullName evidence="1">N-acetyl-L-glutamate 5-phosphotransferase</fullName>
    </alternativeName>
    <alternativeName>
        <fullName evidence="1">NAG kinase</fullName>
        <shortName evidence="1">NAGK</shortName>
    </alternativeName>
</protein>
<accession>Q0AUM4</accession>
<sequence length="287" mass="30506">MIVSAMEKAEILVEALPYIKDFYGRRVVIKYGGAAMTDCELKQKVMQDIVLMKFVGMHPIVVHGGGPEINQMLSRLGIQSEFVNGFRVTDAATMEIVEMVLGGKVNKEIVAGIHASGGKAVGISGKDGMLIQAHPADGSGKMGFVGEVQYVNPELIEKVIENGYIPVIAPIGIGEDQQSYNINADLVAAAIAVSMKADKLVLLTDVPGLMMNPADSNSLISVLKVSEVENYVQEGIIAGGMVPKVQCCVEAVTGGVGRTHIIDGRVPHSILLEIFTDEGIGTMVVNE</sequence>
<reference key="1">
    <citation type="journal article" date="2010" name="Environ. Microbiol.">
        <title>The genome of Syntrophomonas wolfei: new insights into syntrophic metabolism and biohydrogen production.</title>
        <authorList>
            <person name="Sieber J.R."/>
            <person name="Sims D.R."/>
            <person name="Han C."/>
            <person name="Kim E."/>
            <person name="Lykidis A."/>
            <person name="Lapidus A.L."/>
            <person name="McDonnald E."/>
            <person name="Rohlin L."/>
            <person name="Culley D.E."/>
            <person name="Gunsalus R."/>
            <person name="McInerney M.J."/>
        </authorList>
    </citation>
    <scope>NUCLEOTIDE SEQUENCE [LARGE SCALE GENOMIC DNA]</scope>
    <source>
        <strain>DSM 2245B / Goettingen</strain>
    </source>
</reference>
<gene>
    <name evidence="1" type="primary">argB</name>
    <name type="ordered locus">Swol_2289</name>
</gene>
<evidence type="ECO:0000255" key="1">
    <source>
        <dbReference type="HAMAP-Rule" id="MF_00082"/>
    </source>
</evidence>